<proteinExistence type="inferred from homology"/>
<dbReference type="EMBL" id="CP000411">
    <property type="protein sequence ID" value="ABJ56231.1"/>
    <property type="molecule type" value="Genomic_DNA"/>
</dbReference>
<dbReference type="SMR" id="Q04H41"/>
<dbReference type="STRING" id="203123.OEOE_0247"/>
<dbReference type="KEGG" id="ooe:OEOE_0247"/>
<dbReference type="eggNOG" id="COG0218">
    <property type="taxonomic scope" value="Bacteria"/>
</dbReference>
<dbReference type="HOGENOM" id="CLU_033732_3_0_9"/>
<dbReference type="Proteomes" id="UP000000774">
    <property type="component" value="Chromosome"/>
</dbReference>
<dbReference type="GO" id="GO:0005829">
    <property type="term" value="C:cytosol"/>
    <property type="evidence" value="ECO:0007669"/>
    <property type="project" value="TreeGrafter"/>
</dbReference>
<dbReference type="GO" id="GO:0005525">
    <property type="term" value="F:GTP binding"/>
    <property type="evidence" value="ECO:0007669"/>
    <property type="project" value="UniProtKB-UniRule"/>
</dbReference>
<dbReference type="GO" id="GO:0046872">
    <property type="term" value="F:metal ion binding"/>
    <property type="evidence" value="ECO:0007669"/>
    <property type="project" value="UniProtKB-KW"/>
</dbReference>
<dbReference type="GO" id="GO:0000917">
    <property type="term" value="P:division septum assembly"/>
    <property type="evidence" value="ECO:0007669"/>
    <property type="project" value="UniProtKB-KW"/>
</dbReference>
<dbReference type="CDD" id="cd01876">
    <property type="entry name" value="YihA_EngB"/>
    <property type="match status" value="1"/>
</dbReference>
<dbReference type="FunFam" id="3.40.50.300:FF:000098">
    <property type="entry name" value="Probable GTP-binding protein EngB"/>
    <property type="match status" value="1"/>
</dbReference>
<dbReference type="Gene3D" id="3.40.50.300">
    <property type="entry name" value="P-loop containing nucleotide triphosphate hydrolases"/>
    <property type="match status" value="1"/>
</dbReference>
<dbReference type="HAMAP" id="MF_00321">
    <property type="entry name" value="GTPase_EngB"/>
    <property type="match status" value="1"/>
</dbReference>
<dbReference type="InterPro" id="IPR030393">
    <property type="entry name" value="G_ENGB_dom"/>
</dbReference>
<dbReference type="InterPro" id="IPR006073">
    <property type="entry name" value="GTP-bd"/>
</dbReference>
<dbReference type="InterPro" id="IPR019987">
    <property type="entry name" value="GTP-bd_ribosome_bio_YsxC"/>
</dbReference>
<dbReference type="InterPro" id="IPR027417">
    <property type="entry name" value="P-loop_NTPase"/>
</dbReference>
<dbReference type="InterPro" id="IPR005225">
    <property type="entry name" value="Small_GTP-bd"/>
</dbReference>
<dbReference type="NCBIfam" id="TIGR03598">
    <property type="entry name" value="GTPase_YsxC"/>
    <property type="match status" value="1"/>
</dbReference>
<dbReference type="NCBIfam" id="TIGR00231">
    <property type="entry name" value="small_GTP"/>
    <property type="match status" value="1"/>
</dbReference>
<dbReference type="PANTHER" id="PTHR11649:SF13">
    <property type="entry name" value="ENGB-TYPE G DOMAIN-CONTAINING PROTEIN"/>
    <property type="match status" value="1"/>
</dbReference>
<dbReference type="PANTHER" id="PTHR11649">
    <property type="entry name" value="MSS1/TRME-RELATED GTP-BINDING PROTEIN"/>
    <property type="match status" value="1"/>
</dbReference>
<dbReference type="Pfam" id="PF01926">
    <property type="entry name" value="MMR_HSR1"/>
    <property type="match status" value="1"/>
</dbReference>
<dbReference type="SUPFAM" id="SSF52540">
    <property type="entry name" value="P-loop containing nucleoside triphosphate hydrolases"/>
    <property type="match status" value="1"/>
</dbReference>
<dbReference type="PROSITE" id="PS51706">
    <property type="entry name" value="G_ENGB"/>
    <property type="match status" value="1"/>
</dbReference>
<reference key="1">
    <citation type="journal article" date="2006" name="Proc. Natl. Acad. Sci. U.S.A.">
        <title>Comparative genomics of the lactic acid bacteria.</title>
        <authorList>
            <person name="Makarova K.S."/>
            <person name="Slesarev A."/>
            <person name="Wolf Y.I."/>
            <person name="Sorokin A."/>
            <person name="Mirkin B."/>
            <person name="Koonin E.V."/>
            <person name="Pavlov A."/>
            <person name="Pavlova N."/>
            <person name="Karamychev V."/>
            <person name="Polouchine N."/>
            <person name="Shakhova V."/>
            <person name="Grigoriev I."/>
            <person name="Lou Y."/>
            <person name="Rohksar D."/>
            <person name="Lucas S."/>
            <person name="Huang K."/>
            <person name="Goodstein D.M."/>
            <person name="Hawkins T."/>
            <person name="Plengvidhya V."/>
            <person name="Welker D."/>
            <person name="Hughes J."/>
            <person name="Goh Y."/>
            <person name="Benson A."/>
            <person name="Baldwin K."/>
            <person name="Lee J.-H."/>
            <person name="Diaz-Muniz I."/>
            <person name="Dosti B."/>
            <person name="Smeianov V."/>
            <person name="Wechter W."/>
            <person name="Barabote R."/>
            <person name="Lorca G."/>
            <person name="Altermann E."/>
            <person name="Barrangou R."/>
            <person name="Ganesan B."/>
            <person name="Xie Y."/>
            <person name="Rawsthorne H."/>
            <person name="Tamir D."/>
            <person name="Parker C."/>
            <person name="Breidt F."/>
            <person name="Broadbent J.R."/>
            <person name="Hutkins R."/>
            <person name="O'Sullivan D."/>
            <person name="Steele J."/>
            <person name="Unlu G."/>
            <person name="Saier M.H. Jr."/>
            <person name="Klaenhammer T."/>
            <person name="Richardson P."/>
            <person name="Kozyavkin S."/>
            <person name="Weimer B.C."/>
            <person name="Mills D.A."/>
        </authorList>
    </citation>
    <scope>NUCLEOTIDE SEQUENCE [LARGE SCALE GENOMIC DNA]</scope>
    <source>
        <strain>ATCC BAA-331 / PSU-1</strain>
    </source>
</reference>
<gene>
    <name evidence="1" type="primary">engB</name>
    <name type="ordered locus">OEOE_0247</name>
</gene>
<name>ENGB_OENOB</name>
<comment type="function">
    <text evidence="1">Necessary for normal cell division and for the maintenance of normal septation.</text>
</comment>
<comment type="cofactor">
    <cofactor evidence="1">
        <name>Mg(2+)</name>
        <dbReference type="ChEBI" id="CHEBI:18420"/>
    </cofactor>
</comment>
<comment type="similarity">
    <text evidence="1">Belongs to the TRAFAC class TrmE-Era-EngA-EngB-Septin-like GTPase superfamily. EngB GTPase family.</text>
</comment>
<protein>
    <recommendedName>
        <fullName evidence="1">Probable GTP-binding protein EngB</fullName>
    </recommendedName>
</protein>
<feature type="chain" id="PRO_1000005835" description="Probable GTP-binding protein EngB">
    <location>
        <begin position="1"/>
        <end position="198"/>
    </location>
</feature>
<feature type="domain" description="EngB-type G" evidence="1">
    <location>
        <begin position="22"/>
        <end position="196"/>
    </location>
</feature>
<feature type="binding site" evidence="1">
    <location>
        <begin position="30"/>
        <end position="37"/>
    </location>
    <ligand>
        <name>GTP</name>
        <dbReference type="ChEBI" id="CHEBI:37565"/>
    </ligand>
</feature>
<feature type="binding site" evidence="1">
    <location>
        <position position="37"/>
    </location>
    <ligand>
        <name>Mg(2+)</name>
        <dbReference type="ChEBI" id="CHEBI:18420"/>
    </ligand>
</feature>
<feature type="binding site" evidence="1">
    <location>
        <begin position="57"/>
        <end position="61"/>
    </location>
    <ligand>
        <name>GTP</name>
        <dbReference type="ChEBI" id="CHEBI:37565"/>
    </ligand>
</feature>
<feature type="binding site" evidence="1">
    <location>
        <position position="59"/>
    </location>
    <ligand>
        <name>Mg(2+)</name>
        <dbReference type="ChEBI" id="CHEBI:18420"/>
    </ligand>
</feature>
<feature type="binding site" evidence="1">
    <location>
        <begin position="75"/>
        <end position="78"/>
    </location>
    <ligand>
        <name>GTP</name>
        <dbReference type="ChEBI" id="CHEBI:37565"/>
    </ligand>
</feature>
<feature type="binding site" evidence="1">
    <location>
        <begin position="142"/>
        <end position="145"/>
    </location>
    <ligand>
        <name>GTP</name>
        <dbReference type="ChEBI" id="CHEBI:37565"/>
    </ligand>
</feature>
<feature type="binding site" evidence="1">
    <location>
        <begin position="175"/>
        <end position="177"/>
    </location>
    <ligand>
        <name>GTP</name>
        <dbReference type="ChEBI" id="CHEBI:37565"/>
    </ligand>
</feature>
<evidence type="ECO:0000255" key="1">
    <source>
        <dbReference type="HAMAP-Rule" id="MF_00321"/>
    </source>
</evidence>
<keyword id="KW-0131">Cell cycle</keyword>
<keyword id="KW-0132">Cell division</keyword>
<keyword id="KW-0342">GTP-binding</keyword>
<keyword id="KW-0460">Magnesium</keyword>
<keyword id="KW-0479">Metal-binding</keyword>
<keyword id="KW-0547">Nucleotide-binding</keyword>
<keyword id="KW-1185">Reference proteome</keyword>
<keyword id="KW-0717">Septation</keyword>
<organism>
    <name type="scientific">Oenococcus oeni (strain ATCC BAA-331 / PSU-1)</name>
    <dbReference type="NCBI Taxonomy" id="203123"/>
    <lineage>
        <taxon>Bacteria</taxon>
        <taxon>Bacillati</taxon>
        <taxon>Bacillota</taxon>
        <taxon>Bacilli</taxon>
        <taxon>Lactobacillales</taxon>
        <taxon>Lactobacillaceae</taxon>
        <taxon>Oenococcus</taxon>
    </lineage>
</organism>
<accession>Q04H41</accession>
<sequence>MKITNPKLIISAVSKKQYPAGNLSEIAFVGRSNVGKSSLINTLIERNGLAHTSGQPGKTQTLNFYNLDEKLFFVDVPGYGYAKVSKAQREQFGSMVEEYLSSRDQLKGVISLIDARHEPTEDDKLMYNWLEYYQVPILIVATKADKVASGKFNAVESQIKKTLKFNSTTSSLILFSAIKKFGAKEIWNWIKGQAELQE</sequence>